<accession>B7M1G0</accession>
<reference key="1">
    <citation type="journal article" date="2009" name="PLoS Genet.">
        <title>Organised genome dynamics in the Escherichia coli species results in highly diverse adaptive paths.</title>
        <authorList>
            <person name="Touchon M."/>
            <person name="Hoede C."/>
            <person name="Tenaillon O."/>
            <person name="Barbe V."/>
            <person name="Baeriswyl S."/>
            <person name="Bidet P."/>
            <person name="Bingen E."/>
            <person name="Bonacorsi S."/>
            <person name="Bouchier C."/>
            <person name="Bouvet O."/>
            <person name="Calteau A."/>
            <person name="Chiapello H."/>
            <person name="Clermont O."/>
            <person name="Cruveiller S."/>
            <person name="Danchin A."/>
            <person name="Diard M."/>
            <person name="Dossat C."/>
            <person name="Karoui M.E."/>
            <person name="Frapy E."/>
            <person name="Garry L."/>
            <person name="Ghigo J.M."/>
            <person name="Gilles A.M."/>
            <person name="Johnson J."/>
            <person name="Le Bouguenec C."/>
            <person name="Lescat M."/>
            <person name="Mangenot S."/>
            <person name="Martinez-Jehanne V."/>
            <person name="Matic I."/>
            <person name="Nassif X."/>
            <person name="Oztas S."/>
            <person name="Petit M.A."/>
            <person name="Pichon C."/>
            <person name="Rouy Z."/>
            <person name="Ruf C.S."/>
            <person name="Schneider D."/>
            <person name="Tourret J."/>
            <person name="Vacherie B."/>
            <person name="Vallenet D."/>
            <person name="Medigue C."/>
            <person name="Rocha E.P.C."/>
            <person name="Denamur E."/>
        </authorList>
    </citation>
    <scope>NUCLEOTIDE SEQUENCE [LARGE SCALE GENOMIC DNA]</scope>
    <source>
        <strain>IAI1</strain>
    </source>
</reference>
<sequence>MSQPITRENFDEWMIPVYAPAPFIPVRGEGSRLWDQQGKEYIDFAGGIAVNALGHAHPELREALNEQASKFWHTGNGYTNEPVLRLAKKLIDATFADRVFFCNSGAEANEAALKLARKFAHDRYGSHKSGIVAFKNAFHGRTLFTVSAGGQPAYSQDFAPLPADIRHAAYNDINSASALIDDSTCAVIVEPIQGEGGVVPASNAFLQGLRELCNRHNALLIFDEVQTGVGRTGELYAYMHYGVTPDLLTTAKALGGGFPVGALLATEECARVMTVGTHGTTYGGNPLASAVAGKVLELINTPEMLNGVKQRHDWFVERLNTINHRYGLFSEVRGLGLLIGCVLNADYAGQAKQISQEAAKAGVMVLIAGGNVVRFAPALNVSEEEVTTGLDRFAAACEHFVSRGSS</sequence>
<organism>
    <name type="scientific">Escherichia coli O8 (strain IAI1)</name>
    <dbReference type="NCBI Taxonomy" id="585034"/>
    <lineage>
        <taxon>Bacteria</taxon>
        <taxon>Pseudomonadati</taxon>
        <taxon>Pseudomonadota</taxon>
        <taxon>Gammaproteobacteria</taxon>
        <taxon>Enterobacterales</taxon>
        <taxon>Enterobacteriaceae</taxon>
        <taxon>Escherichia</taxon>
    </lineage>
</organism>
<keyword id="KW-0032">Aminotransferase</keyword>
<keyword id="KW-0056">Arginine metabolism</keyword>
<keyword id="KW-0663">Pyridoxal phosphate</keyword>
<keyword id="KW-0808">Transferase</keyword>
<protein>
    <recommendedName>
        <fullName evidence="1">Succinylornithine transaminase</fullName>
        <ecNumber evidence="1">2.6.1.81</ecNumber>
    </recommendedName>
    <alternativeName>
        <fullName evidence="1">Succinylornithine aminotransferase</fullName>
    </alternativeName>
</protein>
<dbReference type="EC" id="2.6.1.81" evidence="1"/>
<dbReference type="EMBL" id="CU928160">
    <property type="protein sequence ID" value="CAQ98665.1"/>
    <property type="molecule type" value="Genomic_DNA"/>
</dbReference>
<dbReference type="RefSeq" id="WP_000081983.1">
    <property type="nucleotide sequence ID" value="NC_011741.1"/>
</dbReference>
<dbReference type="SMR" id="B7M1G0"/>
<dbReference type="GeneID" id="75203054"/>
<dbReference type="KEGG" id="ecr:ECIAI1_1809"/>
<dbReference type="HOGENOM" id="CLU_016922_10_1_6"/>
<dbReference type="UniPathway" id="UPA00185">
    <property type="reaction ID" value="UER00281"/>
</dbReference>
<dbReference type="GO" id="GO:0042802">
    <property type="term" value="F:identical protein binding"/>
    <property type="evidence" value="ECO:0007669"/>
    <property type="project" value="TreeGrafter"/>
</dbReference>
<dbReference type="GO" id="GO:0030170">
    <property type="term" value="F:pyridoxal phosphate binding"/>
    <property type="evidence" value="ECO:0007669"/>
    <property type="project" value="UniProtKB-UniRule"/>
</dbReference>
<dbReference type="GO" id="GO:0043825">
    <property type="term" value="F:succinylornithine transaminase activity"/>
    <property type="evidence" value="ECO:0007669"/>
    <property type="project" value="UniProtKB-EC"/>
</dbReference>
<dbReference type="GO" id="GO:1901607">
    <property type="term" value="P:alpha-amino acid biosynthetic process"/>
    <property type="evidence" value="ECO:0007669"/>
    <property type="project" value="UniProtKB-ARBA"/>
</dbReference>
<dbReference type="GO" id="GO:0019544">
    <property type="term" value="P:arginine catabolic process to glutamate"/>
    <property type="evidence" value="ECO:0007669"/>
    <property type="project" value="UniProtKB-UniRule"/>
</dbReference>
<dbReference type="GO" id="GO:0019545">
    <property type="term" value="P:arginine catabolic process to succinate"/>
    <property type="evidence" value="ECO:0007669"/>
    <property type="project" value="UniProtKB-UniRule"/>
</dbReference>
<dbReference type="GO" id="GO:0006593">
    <property type="term" value="P:ornithine catabolic process"/>
    <property type="evidence" value="ECO:0007669"/>
    <property type="project" value="InterPro"/>
</dbReference>
<dbReference type="CDD" id="cd00610">
    <property type="entry name" value="OAT_like"/>
    <property type="match status" value="1"/>
</dbReference>
<dbReference type="FunFam" id="3.40.640.10:FF:000004">
    <property type="entry name" value="Acetylornithine aminotransferase"/>
    <property type="match status" value="1"/>
</dbReference>
<dbReference type="FunFam" id="3.90.1150.10:FF:000009">
    <property type="entry name" value="Succinylornithine transaminase"/>
    <property type="match status" value="1"/>
</dbReference>
<dbReference type="Gene3D" id="3.90.1150.10">
    <property type="entry name" value="Aspartate Aminotransferase, domain 1"/>
    <property type="match status" value="1"/>
</dbReference>
<dbReference type="Gene3D" id="3.40.640.10">
    <property type="entry name" value="Type I PLP-dependent aspartate aminotransferase-like (Major domain)"/>
    <property type="match status" value="1"/>
</dbReference>
<dbReference type="HAMAP" id="MF_01107">
    <property type="entry name" value="ArgD_aminotrans_3"/>
    <property type="match status" value="1"/>
</dbReference>
<dbReference type="HAMAP" id="MF_01173">
    <property type="entry name" value="AstC_aminotrans_3"/>
    <property type="match status" value="1"/>
</dbReference>
<dbReference type="InterPro" id="IPR017652">
    <property type="entry name" value="Ac/SucOrn_transaminase_bac"/>
</dbReference>
<dbReference type="InterPro" id="IPR004636">
    <property type="entry name" value="AcOrn/SuccOrn_fam"/>
</dbReference>
<dbReference type="InterPro" id="IPR005814">
    <property type="entry name" value="Aminotrans_3"/>
</dbReference>
<dbReference type="InterPro" id="IPR049704">
    <property type="entry name" value="Aminotrans_3_PPA_site"/>
</dbReference>
<dbReference type="InterPro" id="IPR050103">
    <property type="entry name" value="Class-III_PLP-dep_AT"/>
</dbReference>
<dbReference type="InterPro" id="IPR015424">
    <property type="entry name" value="PyrdxlP-dep_Trfase"/>
</dbReference>
<dbReference type="InterPro" id="IPR015421">
    <property type="entry name" value="PyrdxlP-dep_Trfase_major"/>
</dbReference>
<dbReference type="InterPro" id="IPR015422">
    <property type="entry name" value="PyrdxlP-dep_Trfase_small"/>
</dbReference>
<dbReference type="InterPro" id="IPR026330">
    <property type="entry name" value="SOAT"/>
</dbReference>
<dbReference type="NCBIfam" id="TIGR03246">
    <property type="entry name" value="arg_catab_astC"/>
    <property type="match status" value="1"/>
</dbReference>
<dbReference type="NCBIfam" id="TIGR00707">
    <property type="entry name" value="argD"/>
    <property type="match status" value="1"/>
</dbReference>
<dbReference type="NCBIfam" id="NF002325">
    <property type="entry name" value="PRK01278.1"/>
    <property type="match status" value="1"/>
</dbReference>
<dbReference type="NCBIfam" id="NF003468">
    <property type="entry name" value="PRK05093.1"/>
    <property type="match status" value="1"/>
</dbReference>
<dbReference type="NCBIfam" id="NF009047">
    <property type="entry name" value="PRK12381.1"/>
    <property type="match status" value="1"/>
</dbReference>
<dbReference type="PANTHER" id="PTHR11986">
    <property type="entry name" value="AMINOTRANSFERASE CLASS III"/>
    <property type="match status" value="1"/>
</dbReference>
<dbReference type="PANTHER" id="PTHR11986:SF113">
    <property type="entry name" value="SUCCINYLORNITHINE TRANSAMINASE"/>
    <property type="match status" value="1"/>
</dbReference>
<dbReference type="Pfam" id="PF00202">
    <property type="entry name" value="Aminotran_3"/>
    <property type="match status" value="1"/>
</dbReference>
<dbReference type="PIRSF" id="PIRSF000521">
    <property type="entry name" value="Transaminase_4ab_Lys_Orn"/>
    <property type="match status" value="1"/>
</dbReference>
<dbReference type="SUPFAM" id="SSF53383">
    <property type="entry name" value="PLP-dependent transferases"/>
    <property type="match status" value="1"/>
</dbReference>
<dbReference type="PROSITE" id="PS00600">
    <property type="entry name" value="AA_TRANSFER_CLASS_3"/>
    <property type="match status" value="1"/>
</dbReference>
<feature type="chain" id="PRO_1000164380" description="Succinylornithine transaminase">
    <location>
        <begin position="1"/>
        <end position="406"/>
    </location>
</feature>
<feature type="modified residue" description="N6-(pyridoxal phosphate)lysine" evidence="1">
    <location>
        <position position="252"/>
    </location>
</feature>
<name>ASTC_ECO8A</name>
<gene>
    <name evidence="1" type="primary">astC</name>
    <name evidence="1" type="synonym">argM</name>
    <name type="ordered locus">ECIAI1_1809</name>
</gene>
<proteinExistence type="inferred from homology"/>
<evidence type="ECO:0000255" key="1">
    <source>
        <dbReference type="HAMAP-Rule" id="MF_01173"/>
    </source>
</evidence>
<comment type="function">
    <text evidence="1">Catalyzes the transamination of N(2)-succinylornithine and alpha-ketoglutarate into N(2)-succinylglutamate semialdehyde and glutamate. Can also act as an acetylornithine aminotransferase.</text>
</comment>
<comment type="catalytic activity">
    <reaction evidence="1">
        <text>N(2)-succinyl-L-ornithine + 2-oxoglutarate = N-succinyl-L-glutamate 5-semialdehyde + L-glutamate</text>
        <dbReference type="Rhea" id="RHEA:16953"/>
        <dbReference type="ChEBI" id="CHEBI:16810"/>
        <dbReference type="ChEBI" id="CHEBI:29985"/>
        <dbReference type="ChEBI" id="CHEBI:58514"/>
        <dbReference type="ChEBI" id="CHEBI:58520"/>
        <dbReference type="EC" id="2.6.1.81"/>
    </reaction>
</comment>
<comment type="cofactor">
    <cofactor evidence="1">
        <name>pyridoxal 5'-phosphate</name>
        <dbReference type="ChEBI" id="CHEBI:597326"/>
    </cofactor>
</comment>
<comment type="pathway">
    <text evidence="1">Amino-acid degradation; L-arginine degradation via AST pathway; L-glutamate and succinate from L-arginine: step 3/5.</text>
</comment>
<comment type="similarity">
    <text evidence="1">Belongs to the class-III pyridoxal-phosphate-dependent aminotransferase family. AstC subfamily.</text>
</comment>